<name>YNFB_ECOL6</name>
<dbReference type="EMBL" id="AE014075">
    <property type="protein sequence ID" value="AAN80433.1"/>
    <property type="molecule type" value="Genomic_DNA"/>
</dbReference>
<dbReference type="RefSeq" id="WP_000705201.1">
    <property type="nucleotide sequence ID" value="NZ_CP051263.1"/>
</dbReference>
<dbReference type="STRING" id="199310.c1973"/>
<dbReference type="KEGG" id="ecc:c1973"/>
<dbReference type="eggNOG" id="ENOG5032SRB">
    <property type="taxonomic scope" value="Bacteria"/>
</dbReference>
<dbReference type="HOGENOM" id="CLU_167574_0_0_6"/>
<dbReference type="BioCyc" id="ECOL199310:C1973-MONOMER"/>
<dbReference type="Proteomes" id="UP000001410">
    <property type="component" value="Chromosome"/>
</dbReference>
<dbReference type="HAMAP" id="MF_01581">
    <property type="entry name" value="UPF0482"/>
    <property type="match status" value="1"/>
</dbReference>
<dbReference type="InterPro" id="IPR009700">
    <property type="entry name" value="DUF1283"/>
</dbReference>
<dbReference type="NCBIfam" id="NF010180">
    <property type="entry name" value="PRK13659.1"/>
    <property type="match status" value="1"/>
</dbReference>
<dbReference type="Pfam" id="PF06932">
    <property type="entry name" value="DUF1283"/>
    <property type="match status" value="1"/>
</dbReference>
<keyword id="KW-1185">Reference proteome</keyword>
<keyword id="KW-0732">Signal</keyword>
<feature type="signal peptide" evidence="1">
    <location>
        <begin position="1"/>
        <end position="28"/>
    </location>
</feature>
<feature type="chain" id="PRO_0000300223" description="UPF0482 protein YnfB">
    <location>
        <begin position="29"/>
        <end position="113"/>
    </location>
</feature>
<accession>Q8CW20</accession>
<reference key="1">
    <citation type="journal article" date="2002" name="Proc. Natl. Acad. Sci. U.S.A.">
        <title>Extensive mosaic structure revealed by the complete genome sequence of uropathogenic Escherichia coli.</title>
        <authorList>
            <person name="Welch R.A."/>
            <person name="Burland V."/>
            <person name="Plunkett G. III"/>
            <person name="Redford P."/>
            <person name="Roesch P."/>
            <person name="Rasko D."/>
            <person name="Buckles E.L."/>
            <person name="Liou S.-R."/>
            <person name="Boutin A."/>
            <person name="Hackett J."/>
            <person name="Stroud D."/>
            <person name="Mayhew G.F."/>
            <person name="Rose D.J."/>
            <person name="Zhou S."/>
            <person name="Schwartz D.C."/>
            <person name="Perna N.T."/>
            <person name="Mobley H.L.T."/>
            <person name="Donnenberg M.S."/>
            <person name="Blattner F.R."/>
        </authorList>
    </citation>
    <scope>NUCLEOTIDE SEQUENCE [LARGE SCALE GENOMIC DNA]</scope>
    <source>
        <strain>CFT073 / ATCC 700928 / UPEC</strain>
    </source>
</reference>
<organism>
    <name type="scientific">Escherichia coli O6:H1 (strain CFT073 / ATCC 700928 / UPEC)</name>
    <dbReference type="NCBI Taxonomy" id="199310"/>
    <lineage>
        <taxon>Bacteria</taxon>
        <taxon>Pseudomonadati</taxon>
        <taxon>Pseudomonadota</taxon>
        <taxon>Gammaproteobacteria</taxon>
        <taxon>Enterobacterales</taxon>
        <taxon>Enterobacteriaceae</taxon>
        <taxon>Escherichia</taxon>
    </lineage>
</organism>
<proteinExistence type="inferred from homology"/>
<evidence type="ECO:0000255" key="1">
    <source>
        <dbReference type="HAMAP-Rule" id="MF_01581"/>
    </source>
</evidence>
<gene>
    <name evidence="1" type="primary">ynfB</name>
    <name type="ordered locus">c1973</name>
</gene>
<protein>
    <recommendedName>
        <fullName evidence="1">UPF0482 protein YnfB</fullName>
    </recommendedName>
</protein>
<sequence>MKITLSKRIGLLAFLLPCALALSTTVHAETNKLVIESGDSAQSRQRAAMEKEQWNDTRNLRQKVNKRTEKEWDKADAAFDNRDKCEQSANINAYWEPNTLRCLDRRTGRVIIP</sequence>
<comment type="similarity">
    <text evidence="1">Belongs to the UPF0482 family.</text>
</comment>